<protein>
    <recommendedName>
        <fullName evidence="6">Protein disulfide isomerase CRELD2</fullName>
        <ecNumber evidence="2">5.3.4.1</ecNumber>
    </recommendedName>
    <alternativeName>
        <fullName evidence="6">Cysteine-rich with EGF-like domain protein 2</fullName>
    </alternativeName>
</protein>
<comment type="function">
    <text evidence="1 2">Protein disulfide isomerase (By similarity). Might play a role in the unfolded protein response (By similarity). May regulate transport of alpha4-beta2 neuronal acetylcholine receptor (By similarity).</text>
</comment>
<comment type="catalytic activity">
    <reaction evidence="2">
        <text>Catalyzes the rearrangement of -S-S- bonds in proteins.</text>
        <dbReference type="EC" id="5.3.4.1"/>
    </reaction>
</comment>
<comment type="subunit">
    <text evidence="1 2">Interacts with CHRNA4 (By similarity). Component of a complex containing at least CRELD2, MANF, MATN3 and PDIA4 (By similarity).</text>
</comment>
<comment type="subcellular location">
    <subcellularLocation>
        <location evidence="1">Endoplasmic reticulum</location>
    </subcellularLocation>
</comment>
<comment type="similarity">
    <text evidence="6">Belongs to the CRELD family.</text>
</comment>
<dbReference type="EC" id="5.3.4.1" evidence="2"/>
<dbReference type="EMBL" id="BC112517">
    <property type="protein sequence ID" value="AAI12518.1"/>
    <property type="molecule type" value="mRNA"/>
</dbReference>
<dbReference type="RefSeq" id="NP_001039656.1">
    <property type="nucleotide sequence ID" value="NM_001046191.1"/>
</dbReference>
<dbReference type="FunCoup" id="Q2KIT5">
    <property type="interactions" value="1127"/>
</dbReference>
<dbReference type="STRING" id="9913.ENSBTAP00000054551"/>
<dbReference type="GlyCosmos" id="Q2KIT5">
    <property type="glycosylation" value="1 site, No reported glycans"/>
</dbReference>
<dbReference type="GlyGen" id="Q2KIT5">
    <property type="glycosylation" value="1 site"/>
</dbReference>
<dbReference type="PaxDb" id="9913-ENSBTAP00000054551"/>
<dbReference type="GeneID" id="515222"/>
<dbReference type="KEGG" id="bta:515222"/>
<dbReference type="CTD" id="79174"/>
<dbReference type="eggNOG" id="KOG4260">
    <property type="taxonomic scope" value="Eukaryota"/>
</dbReference>
<dbReference type="HOGENOM" id="CLU_038974_1_0_1"/>
<dbReference type="InParanoid" id="Q2KIT5"/>
<dbReference type="OrthoDB" id="19903at2759"/>
<dbReference type="TreeFam" id="TF316507"/>
<dbReference type="Proteomes" id="UP000009136">
    <property type="component" value="Unplaced"/>
</dbReference>
<dbReference type="GO" id="GO:0005783">
    <property type="term" value="C:endoplasmic reticulum"/>
    <property type="evidence" value="ECO:0007669"/>
    <property type="project" value="UniProtKB-SubCell"/>
</dbReference>
<dbReference type="GO" id="GO:0005509">
    <property type="term" value="F:calcium ion binding"/>
    <property type="evidence" value="ECO:0007669"/>
    <property type="project" value="InterPro"/>
</dbReference>
<dbReference type="GO" id="GO:0003756">
    <property type="term" value="F:protein disulfide isomerase activity"/>
    <property type="evidence" value="ECO:0007669"/>
    <property type="project" value="UniProtKB-EC"/>
</dbReference>
<dbReference type="CDD" id="cd00054">
    <property type="entry name" value="EGF_CA"/>
    <property type="match status" value="1"/>
</dbReference>
<dbReference type="CDD" id="cd00064">
    <property type="entry name" value="FU"/>
    <property type="match status" value="1"/>
</dbReference>
<dbReference type="FunFam" id="2.10.25.10:FF:000038">
    <property type="entry name" value="Fibrillin 2"/>
    <property type="match status" value="1"/>
</dbReference>
<dbReference type="Gene3D" id="2.10.25.10">
    <property type="entry name" value="Laminin"/>
    <property type="match status" value="1"/>
</dbReference>
<dbReference type="InterPro" id="IPR001881">
    <property type="entry name" value="EGF-like_Ca-bd_dom"/>
</dbReference>
<dbReference type="InterPro" id="IPR000742">
    <property type="entry name" value="EGF-like_dom"/>
</dbReference>
<dbReference type="InterPro" id="IPR000152">
    <property type="entry name" value="EGF-type_Asp/Asn_hydroxyl_site"/>
</dbReference>
<dbReference type="InterPro" id="IPR018097">
    <property type="entry name" value="EGF_Ca-bd_CS"/>
</dbReference>
<dbReference type="InterPro" id="IPR006212">
    <property type="entry name" value="Furin_repeat"/>
</dbReference>
<dbReference type="InterPro" id="IPR009030">
    <property type="entry name" value="Growth_fac_rcpt_cys_sf"/>
</dbReference>
<dbReference type="InterPro" id="IPR002049">
    <property type="entry name" value="LE_dom"/>
</dbReference>
<dbReference type="InterPro" id="IPR049883">
    <property type="entry name" value="NOTCH1_EGF-like"/>
</dbReference>
<dbReference type="PANTHER" id="PTHR24039:SF28">
    <property type="entry name" value="EGF-LIKE DOMAIN-CONTAINING PROTEIN"/>
    <property type="match status" value="1"/>
</dbReference>
<dbReference type="PANTHER" id="PTHR24039">
    <property type="entry name" value="FIBRILLIN-RELATED"/>
    <property type="match status" value="1"/>
</dbReference>
<dbReference type="Pfam" id="PF07645">
    <property type="entry name" value="EGF_CA"/>
    <property type="match status" value="2"/>
</dbReference>
<dbReference type="SMART" id="SM00181">
    <property type="entry name" value="EGF"/>
    <property type="match status" value="4"/>
</dbReference>
<dbReference type="SMART" id="SM00179">
    <property type="entry name" value="EGF_CA"/>
    <property type="match status" value="2"/>
</dbReference>
<dbReference type="SMART" id="SM00261">
    <property type="entry name" value="FU"/>
    <property type="match status" value="2"/>
</dbReference>
<dbReference type="SUPFAM" id="SSF57184">
    <property type="entry name" value="Growth factor receptor domain"/>
    <property type="match status" value="1"/>
</dbReference>
<dbReference type="PROSITE" id="PS00010">
    <property type="entry name" value="ASX_HYDROXYL"/>
    <property type="match status" value="1"/>
</dbReference>
<dbReference type="PROSITE" id="PS00022">
    <property type="entry name" value="EGF_1"/>
    <property type="match status" value="1"/>
</dbReference>
<dbReference type="PROSITE" id="PS01186">
    <property type="entry name" value="EGF_2"/>
    <property type="match status" value="2"/>
</dbReference>
<dbReference type="PROSITE" id="PS50026">
    <property type="entry name" value="EGF_3"/>
    <property type="match status" value="2"/>
</dbReference>
<dbReference type="PROSITE" id="PS01187">
    <property type="entry name" value="EGF_CA"/>
    <property type="match status" value="2"/>
</dbReference>
<keyword id="KW-0106">Calcium</keyword>
<keyword id="KW-1015">Disulfide bond</keyword>
<keyword id="KW-0245">EGF-like domain</keyword>
<keyword id="KW-0256">Endoplasmic reticulum</keyword>
<keyword id="KW-0325">Glycoprotein</keyword>
<keyword id="KW-0413">Isomerase</keyword>
<keyword id="KW-0676">Redox-active center</keyword>
<keyword id="KW-1185">Reference proteome</keyword>
<keyword id="KW-0677">Repeat</keyword>
<keyword id="KW-0732">Signal</keyword>
<gene>
    <name type="primary">CRELD2</name>
</gene>
<accession>Q2KIT5</accession>
<organism>
    <name type="scientific">Bos taurus</name>
    <name type="common">Bovine</name>
    <dbReference type="NCBI Taxonomy" id="9913"/>
    <lineage>
        <taxon>Eukaryota</taxon>
        <taxon>Metazoa</taxon>
        <taxon>Chordata</taxon>
        <taxon>Craniata</taxon>
        <taxon>Vertebrata</taxon>
        <taxon>Euteleostomi</taxon>
        <taxon>Mammalia</taxon>
        <taxon>Eutheria</taxon>
        <taxon>Laurasiatheria</taxon>
        <taxon>Artiodactyla</taxon>
        <taxon>Ruminantia</taxon>
        <taxon>Pecora</taxon>
        <taxon>Bovidae</taxon>
        <taxon>Bovinae</taxon>
        <taxon>Bos</taxon>
    </lineage>
</organism>
<sequence>MRPPAPAVLGLLLLLLPTGEATKKPTPCKRCRELVDKFNQGMVDTAKKNFGGGNTAWEEKTLSKYEFSEVRLLEIVEGLCEASDFECNQLLEEQEELLEAWWLRLKKKHPDLFEWFCVQTLKACCSPGTYGPDCLACQGGSERPCSGNGHCVGDGTREGDGSCQCHLGYQGPLCSDCMDGYFRSPTSETHSICSACDEACKTCVGPTNRDCGQCEVGWVRQDDACVDVDECAAEPPPCEDTQYCENVNGSFVCEECDPTCMGCTGKGPTQCRECIAGYSKESGQCEDIDECSLAEKPCLRDNENCYNTPGSFVCVCPDGFEEAEDTCVQTRPAGAEATEASPTQPPSREDL</sequence>
<evidence type="ECO:0000250" key="1">
    <source>
        <dbReference type="UniProtKB" id="Q6UXH1"/>
    </source>
</evidence>
<evidence type="ECO:0000250" key="2">
    <source>
        <dbReference type="UniProtKB" id="Q9CYA0"/>
    </source>
</evidence>
<evidence type="ECO:0000255" key="3"/>
<evidence type="ECO:0000255" key="4">
    <source>
        <dbReference type="PROSITE-ProRule" id="PRU00076"/>
    </source>
</evidence>
<evidence type="ECO:0000256" key="5">
    <source>
        <dbReference type="SAM" id="MobiDB-lite"/>
    </source>
</evidence>
<evidence type="ECO:0000305" key="6"/>
<feature type="signal peptide" evidence="3">
    <location>
        <begin position="1"/>
        <end position="21"/>
    </location>
</feature>
<feature type="chain" id="PRO_0000256243" description="Protein disulfide isomerase CRELD2">
    <location>
        <begin position="22"/>
        <end position="351"/>
    </location>
</feature>
<feature type="domain" description="EGF-like 1" evidence="4">
    <location>
        <begin position="133"/>
        <end position="175"/>
    </location>
</feature>
<feature type="repeat" description="FU 1">
    <location>
        <begin position="190"/>
        <end position="237"/>
    </location>
</feature>
<feature type="repeat" description="FU 2">
    <location>
        <begin position="250"/>
        <end position="297"/>
    </location>
</feature>
<feature type="domain" description="EGF-like 2; calcium-binding" evidence="4">
    <location>
        <begin position="287"/>
        <end position="328"/>
    </location>
</feature>
<feature type="region of interest" description="Disordered" evidence="5">
    <location>
        <begin position="329"/>
        <end position="351"/>
    </location>
</feature>
<feature type="short sequence motif" description="CXXC" evidence="2">
    <location>
        <begin position="28"/>
        <end position="31"/>
    </location>
</feature>
<feature type="short sequence motif" description="CXXC" evidence="2">
    <location>
        <begin position="260"/>
        <end position="263"/>
    </location>
</feature>
<feature type="glycosylation site" description="N-linked (GlcNAc...) asparagine" evidence="3">
    <location>
        <position position="248"/>
    </location>
</feature>
<feature type="disulfide bond" description="Redox-active" evidence="2">
    <location>
        <begin position="28"/>
        <end position="31"/>
    </location>
</feature>
<feature type="disulfide bond" evidence="4">
    <location>
        <begin position="137"/>
        <end position="151"/>
    </location>
</feature>
<feature type="disulfide bond" evidence="4">
    <location>
        <begin position="145"/>
        <end position="163"/>
    </location>
</feature>
<feature type="disulfide bond" evidence="4">
    <location>
        <begin position="165"/>
        <end position="174"/>
    </location>
</feature>
<feature type="disulfide bond" description="Redox-active" evidence="2">
    <location>
        <begin position="260"/>
        <end position="263"/>
    </location>
</feature>
<feature type="disulfide bond" evidence="4">
    <location>
        <begin position="291"/>
        <end position="305"/>
    </location>
</feature>
<feature type="disulfide bond" evidence="4">
    <location>
        <begin position="298"/>
        <end position="314"/>
    </location>
</feature>
<feature type="disulfide bond" evidence="4">
    <location>
        <begin position="316"/>
        <end position="327"/>
    </location>
</feature>
<reference key="1">
    <citation type="submission" date="2006-01" db="EMBL/GenBank/DDBJ databases">
        <authorList>
            <consortium name="NIH - Mammalian Gene Collection (MGC) project"/>
        </authorList>
    </citation>
    <scope>NUCLEOTIDE SEQUENCE [LARGE SCALE MRNA]</scope>
    <source>
        <strain>Hereford</strain>
        <tissue>Testis</tissue>
    </source>
</reference>
<name>CREL2_BOVIN</name>
<proteinExistence type="evidence at transcript level"/>